<dbReference type="EC" id="2.4.2.18" evidence="1"/>
<dbReference type="EMBL" id="AM406671">
    <property type="protein sequence ID" value="CAL97626.1"/>
    <property type="molecule type" value="Genomic_DNA"/>
</dbReference>
<dbReference type="RefSeq" id="WP_011834959.1">
    <property type="nucleotide sequence ID" value="NC_009004.1"/>
</dbReference>
<dbReference type="SMR" id="A2RK17"/>
<dbReference type="STRING" id="416870.llmg_1032"/>
<dbReference type="KEGG" id="llm:llmg_1032"/>
<dbReference type="eggNOG" id="COG0547">
    <property type="taxonomic scope" value="Bacteria"/>
</dbReference>
<dbReference type="HOGENOM" id="CLU_034315_2_1_9"/>
<dbReference type="OrthoDB" id="9806430at2"/>
<dbReference type="PhylomeDB" id="A2RK17"/>
<dbReference type="UniPathway" id="UPA00035">
    <property type="reaction ID" value="UER00041"/>
</dbReference>
<dbReference type="Proteomes" id="UP000000364">
    <property type="component" value="Chromosome"/>
</dbReference>
<dbReference type="GO" id="GO:0005829">
    <property type="term" value="C:cytosol"/>
    <property type="evidence" value="ECO:0007669"/>
    <property type="project" value="TreeGrafter"/>
</dbReference>
<dbReference type="GO" id="GO:0004048">
    <property type="term" value="F:anthranilate phosphoribosyltransferase activity"/>
    <property type="evidence" value="ECO:0007669"/>
    <property type="project" value="UniProtKB-UniRule"/>
</dbReference>
<dbReference type="GO" id="GO:0000287">
    <property type="term" value="F:magnesium ion binding"/>
    <property type="evidence" value="ECO:0007669"/>
    <property type="project" value="UniProtKB-UniRule"/>
</dbReference>
<dbReference type="GO" id="GO:0000162">
    <property type="term" value="P:L-tryptophan biosynthetic process"/>
    <property type="evidence" value="ECO:0007669"/>
    <property type="project" value="UniProtKB-UniRule"/>
</dbReference>
<dbReference type="FunFam" id="3.40.1030.10:FF:000002">
    <property type="entry name" value="Anthranilate phosphoribosyltransferase"/>
    <property type="match status" value="1"/>
</dbReference>
<dbReference type="Gene3D" id="3.40.1030.10">
    <property type="entry name" value="Nucleoside phosphorylase/phosphoribosyltransferase catalytic domain"/>
    <property type="match status" value="1"/>
</dbReference>
<dbReference type="Gene3D" id="1.20.970.10">
    <property type="entry name" value="Transferase, Pyrimidine Nucleoside Phosphorylase, Chain C"/>
    <property type="match status" value="1"/>
</dbReference>
<dbReference type="HAMAP" id="MF_00211">
    <property type="entry name" value="TrpD"/>
    <property type="match status" value="1"/>
</dbReference>
<dbReference type="InterPro" id="IPR005940">
    <property type="entry name" value="Anthranilate_Pribosyl_Tfrase"/>
</dbReference>
<dbReference type="InterPro" id="IPR000312">
    <property type="entry name" value="Glycosyl_Trfase_fam3"/>
</dbReference>
<dbReference type="InterPro" id="IPR017459">
    <property type="entry name" value="Glycosyl_Trfase_fam3_N_dom"/>
</dbReference>
<dbReference type="InterPro" id="IPR036320">
    <property type="entry name" value="Glycosyl_Trfase_fam3_N_dom_sf"/>
</dbReference>
<dbReference type="InterPro" id="IPR035902">
    <property type="entry name" value="Nuc_phospho_transferase"/>
</dbReference>
<dbReference type="NCBIfam" id="TIGR01245">
    <property type="entry name" value="trpD"/>
    <property type="match status" value="1"/>
</dbReference>
<dbReference type="PANTHER" id="PTHR43285">
    <property type="entry name" value="ANTHRANILATE PHOSPHORIBOSYLTRANSFERASE"/>
    <property type="match status" value="1"/>
</dbReference>
<dbReference type="PANTHER" id="PTHR43285:SF2">
    <property type="entry name" value="ANTHRANILATE PHOSPHORIBOSYLTRANSFERASE"/>
    <property type="match status" value="1"/>
</dbReference>
<dbReference type="Pfam" id="PF02885">
    <property type="entry name" value="Glycos_trans_3N"/>
    <property type="match status" value="1"/>
</dbReference>
<dbReference type="Pfam" id="PF00591">
    <property type="entry name" value="Glycos_transf_3"/>
    <property type="match status" value="1"/>
</dbReference>
<dbReference type="SUPFAM" id="SSF52418">
    <property type="entry name" value="Nucleoside phosphorylase/phosphoribosyltransferase catalytic domain"/>
    <property type="match status" value="1"/>
</dbReference>
<dbReference type="SUPFAM" id="SSF47648">
    <property type="entry name" value="Nucleoside phosphorylase/phosphoribosyltransferase N-terminal domain"/>
    <property type="match status" value="1"/>
</dbReference>
<comment type="function">
    <text evidence="1">Catalyzes the transfer of the phosphoribosyl group of 5-phosphorylribose-1-pyrophosphate (PRPP) to anthranilate to yield N-(5'-phosphoribosyl)-anthranilate (PRA).</text>
</comment>
<comment type="catalytic activity">
    <reaction evidence="1">
        <text>N-(5-phospho-beta-D-ribosyl)anthranilate + diphosphate = 5-phospho-alpha-D-ribose 1-diphosphate + anthranilate</text>
        <dbReference type="Rhea" id="RHEA:11768"/>
        <dbReference type="ChEBI" id="CHEBI:16567"/>
        <dbReference type="ChEBI" id="CHEBI:18277"/>
        <dbReference type="ChEBI" id="CHEBI:33019"/>
        <dbReference type="ChEBI" id="CHEBI:58017"/>
        <dbReference type="EC" id="2.4.2.18"/>
    </reaction>
</comment>
<comment type="cofactor">
    <cofactor evidence="1">
        <name>Mg(2+)</name>
        <dbReference type="ChEBI" id="CHEBI:18420"/>
    </cofactor>
    <text evidence="1">Binds 2 magnesium ions per monomer.</text>
</comment>
<comment type="pathway">
    <text evidence="1">Amino-acid biosynthesis; L-tryptophan biosynthesis; L-tryptophan from chorismate: step 2/5.</text>
</comment>
<comment type="subunit">
    <text evidence="1">Homodimer.</text>
</comment>
<comment type="similarity">
    <text evidence="1">Belongs to the anthranilate phosphoribosyltransferase family.</text>
</comment>
<name>TRPD_LACLM</name>
<gene>
    <name evidence="1" type="primary">trpD</name>
    <name type="ordered locus">llmg_1032</name>
</gene>
<sequence>MKNELEKVMAGRDMTENEMNMLANSIIQGELSDVQIASFLVALKMKGESASELTGLARALQKAAISIPTNLTNAMDNCGTGGDRSFSFNISTTAAFVLAAGGVNMAKHGNRSITSKSGSADVLEALGINLYLPAEKLAQVFDKVGLVFLFAQNLHPAMKYFTPVRRQLEIPTIMNLTGPLINPIPLDTQLLGTSRPDLLELTANVLKGLGRKRALVITGEGGMDEATPFGLNHYALLENGEVTLHKFRAADVGMSEVALNDIRGGEAPENAEILKNVLENCSSAFLETTVLNAGLGFYANGKVDSIKSGIELAREVIAQGAALEKLHELQAEQIG</sequence>
<organism>
    <name type="scientific">Lactococcus lactis subsp. cremoris (strain MG1363)</name>
    <dbReference type="NCBI Taxonomy" id="416870"/>
    <lineage>
        <taxon>Bacteria</taxon>
        <taxon>Bacillati</taxon>
        <taxon>Bacillota</taxon>
        <taxon>Bacilli</taxon>
        <taxon>Lactobacillales</taxon>
        <taxon>Streptococcaceae</taxon>
        <taxon>Lactococcus</taxon>
        <taxon>Lactococcus cremoris subsp. cremoris</taxon>
    </lineage>
</organism>
<keyword id="KW-0028">Amino-acid biosynthesis</keyword>
<keyword id="KW-0057">Aromatic amino acid biosynthesis</keyword>
<keyword id="KW-0328">Glycosyltransferase</keyword>
<keyword id="KW-0460">Magnesium</keyword>
<keyword id="KW-0479">Metal-binding</keyword>
<keyword id="KW-0808">Transferase</keyword>
<keyword id="KW-0822">Tryptophan biosynthesis</keyword>
<evidence type="ECO:0000255" key="1">
    <source>
        <dbReference type="HAMAP-Rule" id="MF_00211"/>
    </source>
</evidence>
<feature type="chain" id="PRO_1000043019" description="Anthranilate phosphoribosyltransferase">
    <location>
        <begin position="1"/>
        <end position="335"/>
    </location>
</feature>
<feature type="binding site" evidence="1">
    <location>
        <position position="79"/>
    </location>
    <ligand>
        <name>5-phospho-alpha-D-ribose 1-diphosphate</name>
        <dbReference type="ChEBI" id="CHEBI:58017"/>
    </ligand>
</feature>
<feature type="binding site" evidence="1">
    <location>
        <position position="79"/>
    </location>
    <ligand>
        <name>anthranilate</name>
        <dbReference type="ChEBI" id="CHEBI:16567"/>
        <label>1</label>
    </ligand>
</feature>
<feature type="binding site" evidence="1">
    <location>
        <begin position="82"/>
        <end position="83"/>
    </location>
    <ligand>
        <name>5-phospho-alpha-D-ribose 1-diphosphate</name>
        <dbReference type="ChEBI" id="CHEBI:58017"/>
    </ligand>
</feature>
<feature type="binding site" evidence="1">
    <location>
        <position position="87"/>
    </location>
    <ligand>
        <name>5-phospho-alpha-D-ribose 1-diphosphate</name>
        <dbReference type="ChEBI" id="CHEBI:58017"/>
    </ligand>
</feature>
<feature type="binding site" evidence="1">
    <location>
        <begin position="89"/>
        <end position="92"/>
    </location>
    <ligand>
        <name>5-phospho-alpha-D-ribose 1-diphosphate</name>
        <dbReference type="ChEBI" id="CHEBI:58017"/>
    </ligand>
</feature>
<feature type="binding site" evidence="1">
    <location>
        <position position="91"/>
    </location>
    <ligand>
        <name>Mg(2+)</name>
        <dbReference type="ChEBI" id="CHEBI:18420"/>
        <label>1</label>
    </ligand>
</feature>
<feature type="binding site" evidence="1">
    <location>
        <begin position="107"/>
        <end position="115"/>
    </location>
    <ligand>
        <name>5-phospho-alpha-D-ribose 1-diphosphate</name>
        <dbReference type="ChEBI" id="CHEBI:58017"/>
    </ligand>
</feature>
<feature type="binding site" evidence="1">
    <location>
        <position position="110"/>
    </location>
    <ligand>
        <name>anthranilate</name>
        <dbReference type="ChEBI" id="CHEBI:16567"/>
        <label>1</label>
    </ligand>
</feature>
<feature type="binding site" evidence="1">
    <location>
        <position position="119"/>
    </location>
    <ligand>
        <name>5-phospho-alpha-D-ribose 1-diphosphate</name>
        <dbReference type="ChEBI" id="CHEBI:58017"/>
    </ligand>
</feature>
<feature type="binding site" evidence="1">
    <location>
        <position position="165"/>
    </location>
    <ligand>
        <name>anthranilate</name>
        <dbReference type="ChEBI" id="CHEBI:16567"/>
        <label>2</label>
    </ligand>
</feature>
<feature type="binding site" evidence="1">
    <location>
        <position position="224"/>
    </location>
    <ligand>
        <name>Mg(2+)</name>
        <dbReference type="ChEBI" id="CHEBI:18420"/>
        <label>2</label>
    </ligand>
</feature>
<feature type="binding site" evidence="1">
    <location>
        <position position="225"/>
    </location>
    <ligand>
        <name>Mg(2+)</name>
        <dbReference type="ChEBI" id="CHEBI:18420"/>
        <label>1</label>
    </ligand>
</feature>
<feature type="binding site" evidence="1">
    <location>
        <position position="225"/>
    </location>
    <ligand>
        <name>Mg(2+)</name>
        <dbReference type="ChEBI" id="CHEBI:18420"/>
        <label>2</label>
    </ligand>
</feature>
<reference key="1">
    <citation type="journal article" date="2007" name="J. Bacteriol.">
        <title>The complete genome sequence of the lactic acid bacterial paradigm Lactococcus lactis subsp. cremoris MG1363.</title>
        <authorList>
            <person name="Wegmann U."/>
            <person name="O'Connell-Motherway M."/>
            <person name="Zomer A."/>
            <person name="Buist G."/>
            <person name="Shearman C."/>
            <person name="Canchaya C."/>
            <person name="Ventura M."/>
            <person name="Goesmann A."/>
            <person name="Gasson M.J."/>
            <person name="Kuipers O.P."/>
            <person name="van Sinderen D."/>
            <person name="Kok J."/>
        </authorList>
    </citation>
    <scope>NUCLEOTIDE SEQUENCE [LARGE SCALE GENOMIC DNA]</scope>
    <source>
        <strain>MG1363</strain>
    </source>
</reference>
<accession>A2RK17</accession>
<proteinExistence type="inferred from homology"/>
<protein>
    <recommendedName>
        <fullName evidence="1">Anthranilate phosphoribosyltransferase</fullName>
        <ecNumber evidence="1">2.4.2.18</ecNumber>
    </recommendedName>
</protein>